<organism>
    <name type="scientific">Felis catus</name>
    <name type="common">Cat</name>
    <name type="synonym">Felis silvestris catus</name>
    <dbReference type="NCBI Taxonomy" id="9685"/>
    <lineage>
        <taxon>Eukaryota</taxon>
        <taxon>Metazoa</taxon>
        <taxon>Chordata</taxon>
        <taxon>Craniata</taxon>
        <taxon>Vertebrata</taxon>
        <taxon>Euteleostomi</taxon>
        <taxon>Mammalia</taxon>
        <taxon>Eutheria</taxon>
        <taxon>Laurasiatheria</taxon>
        <taxon>Carnivora</taxon>
        <taxon>Feliformia</taxon>
        <taxon>Felidae</taxon>
        <taxon>Felinae</taxon>
        <taxon>Felis</taxon>
    </lineage>
</organism>
<name>GAST_FELCA</name>
<reference key="1">
    <citation type="journal article" date="1991" name="DNA Seq.">
        <title>Bovine and feline gastrin cDNA sequences and the amino acid and nucleotide sequence homologies among mammalian species.</title>
        <authorList>
            <person name="Kim S.J."/>
            <person name="Uhm K.N."/>
            <person name="Kang Y.K."/>
            <person name="Yoo O.J."/>
        </authorList>
    </citation>
    <scope>NUCLEOTIDE SEQUENCE [MRNA]</scope>
    <scope>PYROGLUTAMATE FORMATION AT GLN-59</scope>
</reference>
<reference key="2">
    <citation type="journal article" date="1969" name="J. Am. Chem. Soc.">
        <title>Feline gastrin. An example of peptide sequence analysis by mass spectrometry.</title>
        <authorList>
            <person name="Agarwal K.L."/>
            <person name="Kenner G.W."/>
            <person name="Sheppard R.C."/>
        </authorList>
    </citation>
    <scope>PROTEIN SEQUENCE OF 76-92</scope>
    <scope>PYROGLUTAMATE FORMATION AT GLN-76</scope>
    <scope>SULFATION AT TYR-87</scope>
    <scope>AMIDATION AT PHE-92</scope>
</reference>
<proteinExistence type="evidence at protein level"/>
<keyword id="KW-0027">Amidation</keyword>
<keyword id="KW-0165">Cleavage on pair of basic residues</keyword>
<keyword id="KW-0903">Direct protein sequencing</keyword>
<keyword id="KW-0372">Hormone</keyword>
<keyword id="KW-0597">Phosphoprotein</keyword>
<keyword id="KW-0873">Pyrrolidone carboxylic acid</keyword>
<keyword id="KW-1185">Reference proteome</keyword>
<keyword id="KW-0964">Secreted</keyword>
<keyword id="KW-0732">Signal</keyword>
<keyword id="KW-0765">Sulfation</keyword>
<gene>
    <name type="primary">GAST</name>
    <name type="synonym">GAS</name>
</gene>
<feature type="signal peptide">
    <location>
        <begin position="1"/>
        <end position="21"/>
    </location>
</feature>
<feature type="propeptide" id="PRO_0000010625">
    <location>
        <begin position="22"/>
        <end position="58"/>
    </location>
</feature>
<feature type="peptide" id="PRO_0000010626" description="Big gastrin">
    <location>
        <begin position="59"/>
        <end position="92"/>
    </location>
</feature>
<feature type="peptide" id="PRO_0000010627" description="Gastrin">
    <location>
        <begin position="76"/>
        <end position="92"/>
    </location>
</feature>
<feature type="propeptide" id="PRO_0000010628">
    <location>
        <begin position="96"/>
        <end position="104"/>
    </location>
</feature>
<feature type="region of interest" description="Disordered" evidence="2">
    <location>
        <begin position="22"/>
        <end position="49"/>
    </location>
</feature>
<feature type="modified residue" description="Pyrrolidone carboxylic acid" evidence="3">
    <location>
        <position position="59"/>
    </location>
</feature>
<feature type="modified residue" description="Pyrrolidone carboxylic acid" evidence="4">
    <location>
        <position position="76"/>
    </location>
</feature>
<feature type="modified residue" description="Sulfotyrosine" evidence="4">
    <location>
        <position position="87"/>
    </location>
</feature>
<feature type="modified residue" description="Phenylalanine amide" evidence="4">
    <location>
        <position position="92"/>
    </location>
</feature>
<feature type="modified residue" description="Phosphoserine" evidence="1">
    <location>
        <position position="96"/>
    </location>
</feature>
<dbReference type="EMBL" id="X16582">
    <property type="protein sequence ID" value="CAA34599.1"/>
    <property type="molecule type" value="mRNA"/>
</dbReference>
<dbReference type="PIR" id="S14401">
    <property type="entry name" value="GMCT"/>
</dbReference>
<dbReference type="STRING" id="9685.ENSFCAP00000011542"/>
<dbReference type="PaxDb" id="9685-ENSFCAP00000011542"/>
<dbReference type="eggNOG" id="ENOG502SA9S">
    <property type="taxonomic scope" value="Eukaryota"/>
</dbReference>
<dbReference type="InParanoid" id="P01354"/>
<dbReference type="TreeFam" id="TF336994"/>
<dbReference type="Proteomes" id="UP000011712">
    <property type="component" value="Unplaced"/>
</dbReference>
<dbReference type="GO" id="GO:0005615">
    <property type="term" value="C:extracellular space"/>
    <property type="evidence" value="ECO:0000318"/>
    <property type="project" value="GO_Central"/>
</dbReference>
<dbReference type="GO" id="GO:0005179">
    <property type="term" value="F:hormone activity"/>
    <property type="evidence" value="ECO:0000318"/>
    <property type="project" value="GO_Central"/>
</dbReference>
<dbReference type="GO" id="GO:0007186">
    <property type="term" value="P:G protein-coupled receptor signaling pathway"/>
    <property type="evidence" value="ECO:0000318"/>
    <property type="project" value="GO_Central"/>
</dbReference>
<dbReference type="GO" id="GO:0032094">
    <property type="term" value="P:response to food"/>
    <property type="evidence" value="ECO:0000318"/>
    <property type="project" value="GO_Central"/>
</dbReference>
<dbReference type="InterPro" id="IPR039236">
    <property type="entry name" value="GAST"/>
</dbReference>
<dbReference type="InterPro" id="IPR001651">
    <property type="entry name" value="Gastrin/CCK"/>
</dbReference>
<dbReference type="InterPro" id="IPR013152">
    <property type="entry name" value="Gastrin/cholecystokinin_CS"/>
</dbReference>
<dbReference type="PANTHER" id="PTHR19309">
    <property type="entry name" value="GASTRIN"/>
    <property type="match status" value="1"/>
</dbReference>
<dbReference type="PANTHER" id="PTHR19309:SF0">
    <property type="entry name" value="GASTRIN"/>
    <property type="match status" value="1"/>
</dbReference>
<dbReference type="Pfam" id="PF00918">
    <property type="entry name" value="Gastrin"/>
    <property type="match status" value="1"/>
</dbReference>
<dbReference type="PROSITE" id="PS00259">
    <property type="entry name" value="GASTRIN"/>
    <property type="match status" value="1"/>
</dbReference>
<sequence length="104" mass="11482">MQRLCVCVLILALALTAFSEASWKPRSQLQDAPSGPGANGGLEPHWLNRLGPASHHRWQLGLQGPPQQVADLSKKQGPWLEEEEAAYGWMDFGRRSAEDGDQHP</sequence>
<protein>
    <recommendedName>
        <fullName>Gastrin</fullName>
    </recommendedName>
    <component>
        <recommendedName>
            <fullName>Big gastrin</fullName>
        </recommendedName>
        <alternativeName>
            <fullName>Gastrin-34</fullName>
            <shortName>G34</shortName>
        </alternativeName>
    </component>
    <component>
        <recommendedName>
            <fullName>Gastrin</fullName>
        </recommendedName>
    </component>
</protein>
<evidence type="ECO:0000250" key="1">
    <source>
        <dbReference type="UniProtKB" id="P01353"/>
    </source>
</evidence>
<evidence type="ECO:0000256" key="2">
    <source>
        <dbReference type="SAM" id="MobiDB-lite"/>
    </source>
</evidence>
<evidence type="ECO:0000269" key="3">
    <source>
    </source>
</evidence>
<evidence type="ECO:0000269" key="4">
    <source>
    </source>
</evidence>
<evidence type="ECO:0000305" key="5"/>
<comment type="function">
    <text>Gastrin stimulates the stomach mucosa to produce and secrete hydrochloric acid and the pancreas to secrete its digestive enzymes. It also stimulates smooth muscle contraction and increases blood circulation and water secretion in the stomach and intestine.</text>
</comment>
<comment type="subcellular location">
    <subcellularLocation>
        <location>Secreted</location>
    </subcellularLocation>
</comment>
<comment type="similarity">
    <text evidence="5">Belongs to the gastrin/cholecystokinin family.</text>
</comment>
<accession>P01354</accession>